<evidence type="ECO:0000255" key="1">
    <source>
        <dbReference type="HAMAP-Rule" id="MF_01325"/>
    </source>
</evidence>
<evidence type="ECO:0000305" key="2"/>
<dbReference type="EMBL" id="CP000107">
    <property type="protein sequence ID" value="AAZ68646.1"/>
    <property type="molecule type" value="Genomic_DNA"/>
</dbReference>
<dbReference type="RefSeq" id="WP_011304724.1">
    <property type="nucleotide sequence ID" value="NC_007354.1"/>
</dbReference>
<dbReference type="SMR" id="Q3YRK9"/>
<dbReference type="FunCoup" id="Q3YRK9">
    <property type="interactions" value="360"/>
</dbReference>
<dbReference type="STRING" id="269484.Ecaj_0612"/>
<dbReference type="KEGG" id="ecn:Ecaj_0612"/>
<dbReference type="eggNOG" id="COG0087">
    <property type="taxonomic scope" value="Bacteria"/>
</dbReference>
<dbReference type="HOGENOM" id="CLU_044142_2_0_5"/>
<dbReference type="InParanoid" id="Q3YRK9"/>
<dbReference type="Proteomes" id="UP000000435">
    <property type="component" value="Chromosome"/>
</dbReference>
<dbReference type="GO" id="GO:1990904">
    <property type="term" value="C:ribonucleoprotein complex"/>
    <property type="evidence" value="ECO:0007669"/>
    <property type="project" value="UniProtKB-KW"/>
</dbReference>
<dbReference type="GO" id="GO:0005840">
    <property type="term" value="C:ribosome"/>
    <property type="evidence" value="ECO:0007669"/>
    <property type="project" value="UniProtKB-KW"/>
</dbReference>
<dbReference type="GO" id="GO:0019843">
    <property type="term" value="F:rRNA binding"/>
    <property type="evidence" value="ECO:0007669"/>
    <property type="project" value="UniProtKB-UniRule"/>
</dbReference>
<dbReference type="GO" id="GO:0003735">
    <property type="term" value="F:structural constituent of ribosome"/>
    <property type="evidence" value="ECO:0007669"/>
    <property type="project" value="InterPro"/>
</dbReference>
<dbReference type="GO" id="GO:0006412">
    <property type="term" value="P:translation"/>
    <property type="evidence" value="ECO:0007669"/>
    <property type="project" value="UniProtKB-UniRule"/>
</dbReference>
<dbReference type="FunFam" id="2.40.30.10:FF:000004">
    <property type="entry name" value="50S ribosomal protein L3"/>
    <property type="match status" value="1"/>
</dbReference>
<dbReference type="Gene3D" id="2.40.30.10">
    <property type="entry name" value="Translation factors"/>
    <property type="match status" value="2"/>
</dbReference>
<dbReference type="HAMAP" id="MF_01325_B">
    <property type="entry name" value="Ribosomal_uL3_B"/>
    <property type="match status" value="1"/>
</dbReference>
<dbReference type="InterPro" id="IPR000597">
    <property type="entry name" value="Ribosomal_uL3"/>
</dbReference>
<dbReference type="InterPro" id="IPR019927">
    <property type="entry name" value="Ribosomal_uL3_bac/org-type"/>
</dbReference>
<dbReference type="InterPro" id="IPR019926">
    <property type="entry name" value="Ribosomal_uL3_CS"/>
</dbReference>
<dbReference type="InterPro" id="IPR009000">
    <property type="entry name" value="Transl_B-barrel_sf"/>
</dbReference>
<dbReference type="NCBIfam" id="TIGR03625">
    <property type="entry name" value="L3_bact"/>
    <property type="match status" value="1"/>
</dbReference>
<dbReference type="PANTHER" id="PTHR11229">
    <property type="entry name" value="50S RIBOSOMAL PROTEIN L3"/>
    <property type="match status" value="1"/>
</dbReference>
<dbReference type="PANTHER" id="PTHR11229:SF16">
    <property type="entry name" value="LARGE RIBOSOMAL SUBUNIT PROTEIN UL3C"/>
    <property type="match status" value="1"/>
</dbReference>
<dbReference type="Pfam" id="PF00297">
    <property type="entry name" value="Ribosomal_L3"/>
    <property type="match status" value="1"/>
</dbReference>
<dbReference type="SUPFAM" id="SSF50447">
    <property type="entry name" value="Translation proteins"/>
    <property type="match status" value="1"/>
</dbReference>
<dbReference type="PROSITE" id="PS00474">
    <property type="entry name" value="RIBOSOMAL_L3"/>
    <property type="match status" value="1"/>
</dbReference>
<comment type="function">
    <text evidence="1">One of the primary rRNA binding proteins, it binds directly near the 3'-end of the 23S rRNA, where it nucleates assembly of the 50S subunit.</text>
</comment>
<comment type="subunit">
    <text evidence="1">Part of the 50S ribosomal subunit. Forms a cluster with proteins L14 and L19.</text>
</comment>
<comment type="PTM">
    <text evidence="1">Methylated by PrmB.</text>
</comment>
<comment type="similarity">
    <text evidence="1">Belongs to the universal ribosomal protein uL3 family.</text>
</comment>
<reference key="1">
    <citation type="journal article" date="2006" name="J. Bacteriol.">
        <title>The genome of the obligately intracellular bacterium Ehrlichia canis reveals themes of complex membrane structure and immune evasion strategies.</title>
        <authorList>
            <person name="Mavromatis K."/>
            <person name="Doyle C.K."/>
            <person name="Lykidis A."/>
            <person name="Ivanova N."/>
            <person name="Francino M.P."/>
            <person name="Chain P."/>
            <person name="Shin M."/>
            <person name="Malfatti S."/>
            <person name="Larimer F."/>
            <person name="Copeland A."/>
            <person name="Detter J.C."/>
            <person name="Land M."/>
            <person name="Richardson P.M."/>
            <person name="Yu X.J."/>
            <person name="Walker D.H."/>
            <person name="McBride J.W."/>
            <person name="Kyrpides N.C."/>
        </authorList>
    </citation>
    <scope>NUCLEOTIDE SEQUENCE [LARGE SCALE GENOMIC DNA]</scope>
    <source>
        <strain>Jake</strain>
    </source>
</reference>
<keyword id="KW-0488">Methylation</keyword>
<keyword id="KW-0687">Ribonucleoprotein</keyword>
<keyword id="KW-0689">Ribosomal protein</keyword>
<keyword id="KW-0694">RNA-binding</keyword>
<keyword id="KW-0699">rRNA-binding</keyword>
<feature type="chain" id="PRO_0000241343" description="Large ribosomal subunit protein uL3">
    <location>
        <begin position="1"/>
        <end position="231"/>
    </location>
</feature>
<feature type="modified residue" description="N5-methylglutamine" evidence="1">
    <location>
        <position position="151"/>
    </location>
</feature>
<name>RL3_EHRCJ</name>
<gene>
    <name evidence="1" type="primary">rplC</name>
    <name type="ordered locus">Ecaj_0612</name>
</gene>
<organism>
    <name type="scientific">Ehrlichia canis (strain Jake)</name>
    <dbReference type="NCBI Taxonomy" id="269484"/>
    <lineage>
        <taxon>Bacteria</taxon>
        <taxon>Pseudomonadati</taxon>
        <taxon>Pseudomonadota</taxon>
        <taxon>Alphaproteobacteria</taxon>
        <taxon>Rickettsiales</taxon>
        <taxon>Anaplasmataceae</taxon>
        <taxon>Ehrlichia</taxon>
    </lineage>
</organism>
<protein>
    <recommendedName>
        <fullName evidence="1">Large ribosomal subunit protein uL3</fullName>
    </recommendedName>
    <alternativeName>
        <fullName evidence="2">50S ribosomal protein L3</fullName>
    </alternativeName>
</protein>
<accession>Q3YRK9</accession>
<sequence length="231" mass="25245">MAKRIGLFLEKVGHTAIFDNEGKRIPVTLLHLRDSFIISTKTKDINGYNAVVLGVESSVNIKKPQLKILEKSNITAKCRIFESRVDNLDGIVKGAKISITHFVENQYIDVTGYSLGKGFAGVMKRHNFKGLKASHGVSIAHRSQGSTGQCQDPGRVYKGKKMAGHLGSSKVTVQNLKVILVDQERSLLVVKGNNIPGAKGSYVFVKDAVKKSVPKNSFPVCTEDLKLDNIV</sequence>
<proteinExistence type="inferred from homology"/>